<dbReference type="EMBL" id="CP000708">
    <property type="protein sequence ID" value="ABQ60646.1"/>
    <property type="molecule type" value="Genomic_DNA"/>
</dbReference>
<dbReference type="RefSeq" id="WP_005978400.1">
    <property type="nucleotide sequence ID" value="NC_009505.1"/>
</dbReference>
<dbReference type="SMR" id="A5VP24"/>
<dbReference type="GeneID" id="45123936"/>
<dbReference type="KEGG" id="bov:BOV_0458"/>
<dbReference type="HOGENOM" id="CLU_078938_1_0_5"/>
<dbReference type="PhylomeDB" id="A5VP24"/>
<dbReference type="Proteomes" id="UP000006383">
    <property type="component" value="Chromosome I"/>
</dbReference>
<dbReference type="GO" id="GO:1990904">
    <property type="term" value="C:ribonucleoprotein complex"/>
    <property type="evidence" value="ECO:0007669"/>
    <property type="project" value="UniProtKB-KW"/>
</dbReference>
<dbReference type="GO" id="GO:0005840">
    <property type="term" value="C:ribosome"/>
    <property type="evidence" value="ECO:0007669"/>
    <property type="project" value="UniProtKB-KW"/>
</dbReference>
<dbReference type="GO" id="GO:0019843">
    <property type="term" value="F:rRNA binding"/>
    <property type="evidence" value="ECO:0007669"/>
    <property type="project" value="UniProtKB-UniRule"/>
</dbReference>
<dbReference type="GO" id="GO:0003735">
    <property type="term" value="F:structural constituent of ribosome"/>
    <property type="evidence" value="ECO:0007669"/>
    <property type="project" value="InterPro"/>
</dbReference>
<dbReference type="GO" id="GO:0006412">
    <property type="term" value="P:translation"/>
    <property type="evidence" value="ECO:0007669"/>
    <property type="project" value="UniProtKB-UniRule"/>
</dbReference>
<dbReference type="Gene3D" id="3.10.430.100">
    <property type="entry name" value="Ribosomal protein L9, C-terminal domain"/>
    <property type="match status" value="1"/>
</dbReference>
<dbReference type="Gene3D" id="3.40.5.10">
    <property type="entry name" value="Ribosomal protein L9, N-terminal domain"/>
    <property type="match status" value="1"/>
</dbReference>
<dbReference type="HAMAP" id="MF_00503">
    <property type="entry name" value="Ribosomal_bL9"/>
    <property type="match status" value="1"/>
</dbReference>
<dbReference type="InterPro" id="IPR000244">
    <property type="entry name" value="Ribosomal_bL9"/>
</dbReference>
<dbReference type="InterPro" id="IPR009027">
    <property type="entry name" value="Ribosomal_bL9/RNase_H1_N"/>
</dbReference>
<dbReference type="InterPro" id="IPR020594">
    <property type="entry name" value="Ribosomal_bL9_bac/chp"/>
</dbReference>
<dbReference type="InterPro" id="IPR020069">
    <property type="entry name" value="Ribosomal_bL9_C"/>
</dbReference>
<dbReference type="InterPro" id="IPR036791">
    <property type="entry name" value="Ribosomal_bL9_C_sf"/>
</dbReference>
<dbReference type="InterPro" id="IPR020070">
    <property type="entry name" value="Ribosomal_bL9_N"/>
</dbReference>
<dbReference type="InterPro" id="IPR036935">
    <property type="entry name" value="Ribosomal_bL9_N_sf"/>
</dbReference>
<dbReference type="NCBIfam" id="TIGR00158">
    <property type="entry name" value="L9"/>
    <property type="match status" value="1"/>
</dbReference>
<dbReference type="PANTHER" id="PTHR21368">
    <property type="entry name" value="50S RIBOSOMAL PROTEIN L9"/>
    <property type="match status" value="1"/>
</dbReference>
<dbReference type="Pfam" id="PF03948">
    <property type="entry name" value="Ribosomal_L9_C"/>
    <property type="match status" value="1"/>
</dbReference>
<dbReference type="Pfam" id="PF01281">
    <property type="entry name" value="Ribosomal_L9_N"/>
    <property type="match status" value="1"/>
</dbReference>
<dbReference type="SUPFAM" id="SSF55658">
    <property type="entry name" value="L9 N-domain-like"/>
    <property type="match status" value="1"/>
</dbReference>
<dbReference type="SUPFAM" id="SSF55653">
    <property type="entry name" value="Ribosomal protein L9 C-domain"/>
    <property type="match status" value="1"/>
</dbReference>
<dbReference type="PROSITE" id="PS00651">
    <property type="entry name" value="RIBOSOMAL_L9"/>
    <property type="match status" value="1"/>
</dbReference>
<comment type="function">
    <text evidence="1">Binds to the 23S rRNA.</text>
</comment>
<comment type="similarity">
    <text evidence="1">Belongs to the bacterial ribosomal protein bL9 family.</text>
</comment>
<proteinExistence type="inferred from homology"/>
<organism>
    <name type="scientific">Brucella ovis (strain ATCC 25840 / 63/290 / NCTC 10512)</name>
    <dbReference type="NCBI Taxonomy" id="444178"/>
    <lineage>
        <taxon>Bacteria</taxon>
        <taxon>Pseudomonadati</taxon>
        <taxon>Pseudomonadota</taxon>
        <taxon>Alphaproteobacteria</taxon>
        <taxon>Hyphomicrobiales</taxon>
        <taxon>Brucellaceae</taxon>
        <taxon>Brucella/Ochrobactrum group</taxon>
        <taxon>Brucella</taxon>
    </lineage>
</organism>
<keyword id="KW-0687">Ribonucleoprotein</keyword>
<keyword id="KW-0689">Ribosomal protein</keyword>
<keyword id="KW-0694">RNA-binding</keyword>
<keyword id="KW-0699">rRNA-binding</keyword>
<gene>
    <name evidence="1" type="primary">rplI</name>
    <name type="ordered locus">BOV_0458</name>
</gene>
<feature type="chain" id="PRO_1000014747" description="Large ribosomal subunit protein bL9">
    <location>
        <begin position="1"/>
        <end position="189"/>
    </location>
</feature>
<name>RL9_BRUO2</name>
<sequence>MEVILLERIGRLGQMGDTVKVKDGYARNFLLPQGKALRANEANKKKFEGQRAQLEAQNLERKNEAQAVADKLNGESFIVVRSAGETGQLYGSVSTRDIAEIITANGFTLHRNQVELNHPIKTIGLHEVSVLLHPEVQVKVMVNIARSTEEAERQAKGEDLTSIEAIYGIEEQPLSEEVFDDEDEAEDQA</sequence>
<accession>A5VP24</accession>
<protein>
    <recommendedName>
        <fullName evidence="1">Large ribosomal subunit protein bL9</fullName>
    </recommendedName>
    <alternativeName>
        <fullName evidence="2">50S ribosomal protein L9</fullName>
    </alternativeName>
</protein>
<reference key="1">
    <citation type="journal article" date="2009" name="PLoS ONE">
        <title>Genome degradation in Brucella ovis corresponds with narrowing of its host range and tissue tropism.</title>
        <authorList>
            <person name="Tsolis R.M."/>
            <person name="Seshadri R."/>
            <person name="Santos R.L."/>
            <person name="Sangari F.J."/>
            <person name="Lobo J.M."/>
            <person name="de Jong M.F."/>
            <person name="Ren Q."/>
            <person name="Myers G."/>
            <person name="Brinkac L.M."/>
            <person name="Nelson W.C."/>
            <person name="Deboy R.T."/>
            <person name="Angiuoli S."/>
            <person name="Khouri H."/>
            <person name="Dimitrov G."/>
            <person name="Robinson J.R."/>
            <person name="Mulligan S."/>
            <person name="Walker R.L."/>
            <person name="Elzer P.E."/>
            <person name="Hassan K.A."/>
            <person name="Paulsen I.T."/>
        </authorList>
    </citation>
    <scope>NUCLEOTIDE SEQUENCE [LARGE SCALE GENOMIC DNA]</scope>
    <source>
        <strain>ATCC 25840 / 63/290 / NCTC 10512</strain>
    </source>
</reference>
<evidence type="ECO:0000255" key="1">
    <source>
        <dbReference type="HAMAP-Rule" id="MF_00503"/>
    </source>
</evidence>
<evidence type="ECO:0000305" key="2"/>